<sequence length="242" mass="26438">MAKRVLIKFSGEALANEDGHGINSKTLKYIASEIKPLVDSGVEVGLVVGGGNIIRGVNASKEGIIRRSSGDYMGMLATVINAVALQEALEYFGLTARVQSAIEMNEICEPFIVRRAMRHLEKGRIVIFAAGTGNPFFTTDTAATLRAVEIGANMIIKATKVDGVYDKDPHKYPDAKKLDRLTYDEALQDNIKVMDDTAIALAKDNALPIIVCNMFEEGNLYDIIVNNNLEKCSIVTDKKENE</sequence>
<accession>A6Q311</accession>
<gene>
    <name evidence="1" type="primary">pyrH</name>
    <name type="ordered locus">NIS_0758</name>
</gene>
<proteinExistence type="inferred from homology"/>
<protein>
    <recommendedName>
        <fullName evidence="1">Uridylate kinase</fullName>
        <shortName evidence="1">UK</shortName>
        <ecNumber evidence="1">2.7.4.22</ecNumber>
    </recommendedName>
    <alternativeName>
        <fullName evidence="1">Uridine monophosphate kinase</fullName>
        <shortName evidence="1">UMP kinase</shortName>
        <shortName evidence="1">UMPK</shortName>
    </alternativeName>
</protein>
<reference key="1">
    <citation type="journal article" date="2007" name="Proc. Natl. Acad. Sci. U.S.A.">
        <title>Deep-sea vent epsilon-proteobacterial genomes provide insights into emergence of pathogens.</title>
        <authorList>
            <person name="Nakagawa S."/>
            <person name="Takaki Y."/>
            <person name="Shimamura S."/>
            <person name="Reysenbach A.-L."/>
            <person name="Takai K."/>
            <person name="Horikoshi K."/>
        </authorList>
    </citation>
    <scope>NUCLEOTIDE SEQUENCE [LARGE SCALE GENOMIC DNA]</scope>
    <source>
        <strain>SB155-2</strain>
    </source>
</reference>
<organism>
    <name type="scientific">Nitratiruptor sp. (strain SB155-2)</name>
    <dbReference type="NCBI Taxonomy" id="387092"/>
    <lineage>
        <taxon>Bacteria</taxon>
        <taxon>Pseudomonadati</taxon>
        <taxon>Campylobacterota</taxon>
        <taxon>Epsilonproteobacteria</taxon>
        <taxon>Nautiliales</taxon>
        <taxon>Nitratiruptoraceae</taxon>
        <taxon>Nitratiruptor</taxon>
    </lineage>
</organism>
<feature type="chain" id="PRO_1000053967" description="Uridylate kinase">
    <location>
        <begin position="1"/>
        <end position="242"/>
    </location>
</feature>
<feature type="binding site" evidence="1">
    <location>
        <begin position="8"/>
        <end position="11"/>
    </location>
    <ligand>
        <name>ATP</name>
        <dbReference type="ChEBI" id="CHEBI:30616"/>
    </ligand>
</feature>
<feature type="binding site" evidence="1">
    <location>
        <position position="50"/>
    </location>
    <ligand>
        <name>UMP</name>
        <dbReference type="ChEBI" id="CHEBI:57865"/>
    </ligand>
</feature>
<feature type="binding site" evidence="1">
    <location>
        <position position="51"/>
    </location>
    <ligand>
        <name>ATP</name>
        <dbReference type="ChEBI" id="CHEBI:30616"/>
    </ligand>
</feature>
<feature type="binding site" evidence="1">
    <location>
        <position position="55"/>
    </location>
    <ligand>
        <name>ATP</name>
        <dbReference type="ChEBI" id="CHEBI:30616"/>
    </ligand>
</feature>
<feature type="binding site" evidence="1">
    <location>
        <position position="71"/>
    </location>
    <ligand>
        <name>UMP</name>
        <dbReference type="ChEBI" id="CHEBI:57865"/>
    </ligand>
</feature>
<feature type="binding site" evidence="1">
    <location>
        <begin position="132"/>
        <end position="139"/>
    </location>
    <ligand>
        <name>UMP</name>
        <dbReference type="ChEBI" id="CHEBI:57865"/>
    </ligand>
</feature>
<feature type="binding site" evidence="1">
    <location>
        <position position="159"/>
    </location>
    <ligand>
        <name>ATP</name>
        <dbReference type="ChEBI" id="CHEBI:30616"/>
    </ligand>
</feature>
<feature type="binding site" evidence="1">
    <location>
        <position position="165"/>
    </location>
    <ligand>
        <name>ATP</name>
        <dbReference type="ChEBI" id="CHEBI:30616"/>
    </ligand>
</feature>
<feature type="binding site" evidence="1">
    <location>
        <position position="168"/>
    </location>
    <ligand>
        <name>ATP</name>
        <dbReference type="ChEBI" id="CHEBI:30616"/>
    </ligand>
</feature>
<comment type="function">
    <text evidence="1">Catalyzes the reversible phosphorylation of UMP to UDP.</text>
</comment>
<comment type="catalytic activity">
    <reaction evidence="1">
        <text>UMP + ATP = UDP + ADP</text>
        <dbReference type="Rhea" id="RHEA:24400"/>
        <dbReference type="ChEBI" id="CHEBI:30616"/>
        <dbReference type="ChEBI" id="CHEBI:57865"/>
        <dbReference type="ChEBI" id="CHEBI:58223"/>
        <dbReference type="ChEBI" id="CHEBI:456216"/>
        <dbReference type="EC" id="2.7.4.22"/>
    </reaction>
</comment>
<comment type="activity regulation">
    <text evidence="1">Inhibited by UTP.</text>
</comment>
<comment type="pathway">
    <text evidence="1">Pyrimidine metabolism; CTP biosynthesis via de novo pathway; UDP from UMP (UMPK route): step 1/1.</text>
</comment>
<comment type="subunit">
    <text evidence="1">Homohexamer.</text>
</comment>
<comment type="subcellular location">
    <subcellularLocation>
        <location evidence="1">Cytoplasm</location>
    </subcellularLocation>
</comment>
<comment type="similarity">
    <text evidence="1">Belongs to the UMP kinase family.</text>
</comment>
<keyword id="KW-0067">ATP-binding</keyword>
<keyword id="KW-0963">Cytoplasm</keyword>
<keyword id="KW-0418">Kinase</keyword>
<keyword id="KW-0547">Nucleotide-binding</keyword>
<keyword id="KW-0665">Pyrimidine biosynthesis</keyword>
<keyword id="KW-1185">Reference proteome</keyword>
<keyword id="KW-0808">Transferase</keyword>
<name>PYRH_NITSB</name>
<evidence type="ECO:0000255" key="1">
    <source>
        <dbReference type="HAMAP-Rule" id="MF_01220"/>
    </source>
</evidence>
<dbReference type="EC" id="2.7.4.22" evidence="1"/>
<dbReference type="EMBL" id="AP009178">
    <property type="protein sequence ID" value="BAF69870.1"/>
    <property type="molecule type" value="Genomic_DNA"/>
</dbReference>
<dbReference type="RefSeq" id="WP_012082133.1">
    <property type="nucleotide sequence ID" value="NC_009662.1"/>
</dbReference>
<dbReference type="SMR" id="A6Q311"/>
<dbReference type="FunCoup" id="A6Q311">
    <property type="interactions" value="536"/>
</dbReference>
<dbReference type="STRING" id="387092.NIS_0758"/>
<dbReference type="KEGG" id="nis:NIS_0758"/>
<dbReference type="eggNOG" id="COG0528">
    <property type="taxonomic scope" value="Bacteria"/>
</dbReference>
<dbReference type="HOGENOM" id="CLU_033861_0_0_7"/>
<dbReference type="InParanoid" id="A6Q311"/>
<dbReference type="OrthoDB" id="9807458at2"/>
<dbReference type="UniPathway" id="UPA00159">
    <property type="reaction ID" value="UER00275"/>
</dbReference>
<dbReference type="Proteomes" id="UP000001118">
    <property type="component" value="Chromosome"/>
</dbReference>
<dbReference type="GO" id="GO:0005829">
    <property type="term" value="C:cytosol"/>
    <property type="evidence" value="ECO:0007669"/>
    <property type="project" value="TreeGrafter"/>
</dbReference>
<dbReference type="GO" id="GO:0005524">
    <property type="term" value="F:ATP binding"/>
    <property type="evidence" value="ECO:0007669"/>
    <property type="project" value="UniProtKB-KW"/>
</dbReference>
<dbReference type="GO" id="GO:0033862">
    <property type="term" value="F:UMP kinase activity"/>
    <property type="evidence" value="ECO:0007669"/>
    <property type="project" value="UniProtKB-EC"/>
</dbReference>
<dbReference type="GO" id="GO:0044210">
    <property type="term" value="P:'de novo' CTP biosynthetic process"/>
    <property type="evidence" value="ECO:0007669"/>
    <property type="project" value="UniProtKB-UniRule"/>
</dbReference>
<dbReference type="GO" id="GO:0006225">
    <property type="term" value="P:UDP biosynthetic process"/>
    <property type="evidence" value="ECO:0007669"/>
    <property type="project" value="TreeGrafter"/>
</dbReference>
<dbReference type="CDD" id="cd04254">
    <property type="entry name" value="AAK_UMPK-PyrH-Ec"/>
    <property type="match status" value="1"/>
</dbReference>
<dbReference type="FunFam" id="3.40.1160.10:FF:000001">
    <property type="entry name" value="Uridylate kinase"/>
    <property type="match status" value="1"/>
</dbReference>
<dbReference type="Gene3D" id="3.40.1160.10">
    <property type="entry name" value="Acetylglutamate kinase-like"/>
    <property type="match status" value="1"/>
</dbReference>
<dbReference type="HAMAP" id="MF_01220_B">
    <property type="entry name" value="PyrH_B"/>
    <property type="match status" value="1"/>
</dbReference>
<dbReference type="InterPro" id="IPR036393">
    <property type="entry name" value="AceGlu_kinase-like_sf"/>
</dbReference>
<dbReference type="InterPro" id="IPR001048">
    <property type="entry name" value="Asp/Glu/Uridylate_kinase"/>
</dbReference>
<dbReference type="InterPro" id="IPR011817">
    <property type="entry name" value="Uridylate_kinase"/>
</dbReference>
<dbReference type="InterPro" id="IPR015963">
    <property type="entry name" value="Uridylate_kinase_bac"/>
</dbReference>
<dbReference type="NCBIfam" id="TIGR02075">
    <property type="entry name" value="pyrH_bact"/>
    <property type="match status" value="1"/>
</dbReference>
<dbReference type="PANTHER" id="PTHR42833">
    <property type="entry name" value="URIDYLATE KINASE"/>
    <property type="match status" value="1"/>
</dbReference>
<dbReference type="PANTHER" id="PTHR42833:SF4">
    <property type="entry name" value="URIDYLATE KINASE PUMPKIN, CHLOROPLASTIC"/>
    <property type="match status" value="1"/>
</dbReference>
<dbReference type="Pfam" id="PF00696">
    <property type="entry name" value="AA_kinase"/>
    <property type="match status" value="1"/>
</dbReference>
<dbReference type="PIRSF" id="PIRSF005650">
    <property type="entry name" value="Uridylate_kin"/>
    <property type="match status" value="1"/>
</dbReference>
<dbReference type="SUPFAM" id="SSF53633">
    <property type="entry name" value="Carbamate kinase-like"/>
    <property type="match status" value="1"/>
</dbReference>